<geneLocation type="chloroplast"/>
<dbReference type="EMBL" id="DQ821119">
    <property type="protein sequence ID" value="ABG79618.1"/>
    <property type="molecule type" value="Genomic_DNA"/>
</dbReference>
<dbReference type="RefSeq" id="YP_001023719.1">
    <property type="nucleotide sequence ID" value="NC_008829.1"/>
</dbReference>
<dbReference type="SMR" id="A2T351"/>
<dbReference type="GeneID" id="4788253"/>
<dbReference type="GO" id="GO:0009535">
    <property type="term" value="C:chloroplast thylakoid membrane"/>
    <property type="evidence" value="ECO:0007669"/>
    <property type="project" value="UniProtKB-SubCell"/>
</dbReference>
<dbReference type="GO" id="GO:0009512">
    <property type="term" value="C:cytochrome b6f complex"/>
    <property type="evidence" value="ECO:0007669"/>
    <property type="project" value="InterPro"/>
</dbReference>
<dbReference type="GO" id="GO:0045158">
    <property type="term" value="F:electron transporter, transferring electrons within cytochrome b6/f complex of photosystem II activity"/>
    <property type="evidence" value="ECO:0007669"/>
    <property type="project" value="UniProtKB-UniRule"/>
</dbReference>
<dbReference type="GO" id="GO:0015979">
    <property type="term" value="P:photosynthesis"/>
    <property type="evidence" value="ECO:0007669"/>
    <property type="project" value="UniProtKB-KW"/>
</dbReference>
<dbReference type="HAMAP" id="MF_00433">
    <property type="entry name" value="Cytb6_f_PetL"/>
    <property type="match status" value="1"/>
</dbReference>
<dbReference type="InterPro" id="IPR007802">
    <property type="entry name" value="Cyt_b6/f_cplx_su6"/>
</dbReference>
<dbReference type="PANTHER" id="PTHR37266">
    <property type="entry name" value="CYTOCHROME B6-F COMPLEX SUBUNIT 6"/>
    <property type="match status" value="1"/>
</dbReference>
<dbReference type="PANTHER" id="PTHR37266:SF1">
    <property type="entry name" value="CYTOCHROME B6-F COMPLEX SUBUNIT 6"/>
    <property type="match status" value="1"/>
</dbReference>
<dbReference type="Pfam" id="PF05115">
    <property type="entry name" value="PetL"/>
    <property type="match status" value="1"/>
</dbReference>
<reference key="1">
    <citation type="journal article" date="2007" name="Am. Fern J.">
        <title>The complete plastid genome sequence of Angiopteris evecta (G. Forst.) Hoffm. (Marattiaceae).</title>
        <authorList>
            <person name="Roper J.M."/>
            <person name="Hansen S.K."/>
            <person name="Wolf P.G."/>
            <person name="Karol K.G."/>
            <person name="Mandoli D.F."/>
            <person name="Everett K.D.E."/>
            <person name="Kuehl J.V."/>
            <person name="Boore J.L."/>
        </authorList>
    </citation>
    <scope>NUCLEOTIDE SEQUENCE [LARGE SCALE GENOMIC DNA]</scope>
</reference>
<keyword id="KW-0150">Chloroplast</keyword>
<keyword id="KW-0249">Electron transport</keyword>
<keyword id="KW-0472">Membrane</keyword>
<keyword id="KW-0602">Photosynthesis</keyword>
<keyword id="KW-0934">Plastid</keyword>
<keyword id="KW-0793">Thylakoid</keyword>
<keyword id="KW-0812">Transmembrane</keyword>
<keyword id="KW-1133">Transmembrane helix</keyword>
<keyword id="KW-0813">Transport</keyword>
<gene>
    <name evidence="1" type="primary">petL</name>
</gene>
<proteinExistence type="inferred from homology"/>
<evidence type="ECO:0000255" key="1">
    <source>
        <dbReference type="HAMAP-Rule" id="MF_00433"/>
    </source>
</evidence>
<accession>A2T351</accession>
<comment type="function">
    <text evidence="1">Component of the cytochrome b6-f complex, which mediates electron transfer between photosystem II (PSII) and photosystem I (PSI), cyclic electron flow around PSI, and state transitions. PetL is important for photoautotrophic growth as well as for electron transfer efficiency and stability of the cytochrome b6-f complex.</text>
</comment>
<comment type="subunit">
    <text evidence="1">The 4 large subunits of the cytochrome b6-f complex are cytochrome b6, subunit IV (17 kDa polypeptide, PetD), cytochrome f and the Rieske protein, while the 4 small subunits are PetG, PetL, PetM and PetN. The complex functions as a dimer.</text>
</comment>
<comment type="subcellular location">
    <subcellularLocation>
        <location evidence="1">Plastid</location>
        <location evidence="1">Chloroplast thylakoid membrane</location>
        <topology evidence="1">Single-pass membrane protein</topology>
    </subcellularLocation>
</comment>
<comment type="similarity">
    <text evidence="1">Belongs to the PetL family.</text>
</comment>
<name>PETL_ANGEV</name>
<feature type="chain" id="PRO_0000300133" description="Cytochrome b6-f complex subunit 6">
    <location>
        <begin position="1"/>
        <end position="31"/>
    </location>
</feature>
<feature type="transmembrane region" description="Helical" evidence="1">
    <location>
        <begin position="4"/>
        <end position="24"/>
    </location>
</feature>
<protein>
    <recommendedName>
        <fullName evidence="1">Cytochrome b6-f complex subunit 6</fullName>
    </recommendedName>
    <alternativeName>
        <fullName evidence="1">Cytochrome b6-f complex subunit PetL</fullName>
    </alternativeName>
    <alternativeName>
        <fullName evidence="1">Cytochrome b6-f complex subunit VI</fullName>
    </alternativeName>
</protein>
<organism>
    <name type="scientific">Angiopteris evecta</name>
    <name type="common">Mule's foot fern</name>
    <name type="synonym">Polypodium evectum</name>
    <dbReference type="NCBI Taxonomy" id="13825"/>
    <lineage>
        <taxon>Eukaryota</taxon>
        <taxon>Viridiplantae</taxon>
        <taxon>Streptophyta</taxon>
        <taxon>Embryophyta</taxon>
        <taxon>Tracheophyta</taxon>
        <taxon>Polypodiopsida</taxon>
        <taxon>Marattiidae</taxon>
        <taxon>Marattiales</taxon>
        <taxon>Marattiaceae</taxon>
        <taxon>Angiopteris</taxon>
    </lineage>
</organism>
<sequence length="31" mass="3504">MLTLLSYFGFLFAILTLTSVLFIGLNKIQLI</sequence>